<proteinExistence type="inferred from homology"/>
<sequence length="299" mass="31002">MTATEKTELAKAEVLIEALPYFQRYAGRTFVVKYGGHAMGDPKAAREFAEDIVLLKAVGINPVVVHGGGPQIGAMLKRLGVESTFVDGLRVTDKATAEVAEMVLSGAINKELVGWIAQAGGKAMGVSGKDGSLVTATKLERTTRDPESQIEQILDLGFVGEPTHVDTTILDTAVSAGMIPVVAPIGAGEDGHTYNINADTMAGAIAAALGAARLFLLTAVKGVLDKQGGLLTDLTPAQIAKLKDDGTISGGMIPKLDTCVHAVEAGCEAAVVLDGRVPHAMLLEFFTARGAGTLIRADD</sequence>
<comment type="function">
    <text evidence="1">Catalyzes the ATP-dependent phosphorylation of N-acetyl-L-glutamate.</text>
</comment>
<comment type="catalytic activity">
    <reaction evidence="1">
        <text>N-acetyl-L-glutamate + ATP = N-acetyl-L-glutamyl 5-phosphate + ADP</text>
        <dbReference type="Rhea" id="RHEA:14629"/>
        <dbReference type="ChEBI" id="CHEBI:30616"/>
        <dbReference type="ChEBI" id="CHEBI:44337"/>
        <dbReference type="ChEBI" id="CHEBI:57936"/>
        <dbReference type="ChEBI" id="CHEBI:456216"/>
        <dbReference type="EC" id="2.7.2.8"/>
    </reaction>
</comment>
<comment type="pathway">
    <text evidence="1">Amino-acid biosynthesis; L-arginine biosynthesis; N(2)-acetyl-L-ornithine from L-glutamate: step 2/4.</text>
</comment>
<comment type="subcellular location">
    <subcellularLocation>
        <location evidence="1">Cytoplasm</location>
    </subcellularLocation>
</comment>
<comment type="similarity">
    <text evidence="1">Belongs to the acetylglutamate kinase family. ArgB subfamily.</text>
</comment>
<organism>
    <name type="scientific">Erythrobacter litoralis (strain HTCC2594)</name>
    <dbReference type="NCBI Taxonomy" id="314225"/>
    <lineage>
        <taxon>Bacteria</taxon>
        <taxon>Pseudomonadati</taxon>
        <taxon>Pseudomonadota</taxon>
        <taxon>Alphaproteobacteria</taxon>
        <taxon>Sphingomonadales</taxon>
        <taxon>Erythrobacteraceae</taxon>
        <taxon>Erythrobacter/Porphyrobacter group</taxon>
        <taxon>Erythrobacter</taxon>
    </lineage>
</organism>
<protein>
    <recommendedName>
        <fullName evidence="1">Acetylglutamate kinase</fullName>
        <ecNumber evidence="1">2.7.2.8</ecNumber>
    </recommendedName>
    <alternativeName>
        <fullName evidence="1">N-acetyl-L-glutamate 5-phosphotransferase</fullName>
    </alternativeName>
    <alternativeName>
        <fullName evidence="1">NAG kinase</fullName>
        <shortName evidence="1">NAGK</shortName>
    </alternativeName>
</protein>
<gene>
    <name evidence="1" type="primary">argB</name>
    <name type="ordered locus">ELI_11540</name>
</gene>
<dbReference type="EC" id="2.7.2.8" evidence="1"/>
<dbReference type="EMBL" id="CP000157">
    <property type="protein sequence ID" value="ABC64400.1"/>
    <property type="molecule type" value="Genomic_DNA"/>
</dbReference>
<dbReference type="RefSeq" id="WP_011415223.1">
    <property type="nucleotide sequence ID" value="NC_007722.1"/>
</dbReference>
<dbReference type="SMR" id="Q2N7E1"/>
<dbReference type="STRING" id="314225.ELI_11540"/>
<dbReference type="KEGG" id="eli:ELI_11540"/>
<dbReference type="eggNOG" id="COG0548">
    <property type="taxonomic scope" value="Bacteria"/>
</dbReference>
<dbReference type="HOGENOM" id="CLU_053680_0_0_5"/>
<dbReference type="OrthoDB" id="9803155at2"/>
<dbReference type="UniPathway" id="UPA00068">
    <property type="reaction ID" value="UER00107"/>
</dbReference>
<dbReference type="Proteomes" id="UP000008808">
    <property type="component" value="Chromosome"/>
</dbReference>
<dbReference type="GO" id="GO:0005737">
    <property type="term" value="C:cytoplasm"/>
    <property type="evidence" value="ECO:0007669"/>
    <property type="project" value="UniProtKB-SubCell"/>
</dbReference>
<dbReference type="GO" id="GO:0003991">
    <property type="term" value="F:acetylglutamate kinase activity"/>
    <property type="evidence" value="ECO:0007669"/>
    <property type="project" value="UniProtKB-UniRule"/>
</dbReference>
<dbReference type="GO" id="GO:0005524">
    <property type="term" value="F:ATP binding"/>
    <property type="evidence" value="ECO:0007669"/>
    <property type="project" value="UniProtKB-UniRule"/>
</dbReference>
<dbReference type="GO" id="GO:0042450">
    <property type="term" value="P:arginine biosynthetic process via ornithine"/>
    <property type="evidence" value="ECO:0007669"/>
    <property type="project" value="UniProtKB-UniRule"/>
</dbReference>
<dbReference type="GO" id="GO:0006526">
    <property type="term" value="P:L-arginine biosynthetic process"/>
    <property type="evidence" value="ECO:0007669"/>
    <property type="project" value="UniProtKB-UniPathway"/>
</dbReference>
<dbReference type="CDD" id="cd04250">
    <property type="entry name" value="AAK_NAGK-C"/>
    <property type="match status" value="1"/>
</dbReference>
<dbReference type="FunFam" id="3.40.1160.10:FF:000004">
    <property type="entry name" value="Acetylglutamate kinase"/>
    <property type="match status" value="1"/>
</dbReference>
<dbReference type="Gene3D" id="3.40.1160.10">
    <property type="entry name" value="Acetylglutamate kinase-like"/>
    <property type="match status" value="1"/>
</dbReference>
<dbReference type="HAMAP" id="MF_00082">
    <property type="entry name" value="ArgB"/>
    <property type="match status" value="1"/>
</dbReference>
<dbReference type="InterPro" id="IPR036393">
    <property type="entry name" value="AceGlu_kinase-like_sf"/>
</dbReference>
<dbReference type="InterPro" id="IPR004662">
    <property type="entry name" value="AcgluKinase_fam"/>
</dbReference>
<dbReference type="InterPro" id="IPR037528">
    <property type="entry name" value="ArgB"/>
</dbReference>
<dbReference type="InterPro" id="IPR001048">
    <property type="entry name" value="Asp/Glu/Uridylate_kinase"/>
</dbReference>
<dbReference type="InterPro" id="IPR001057">
    <property type="entry name" value="Glu/AcGlu_kinase"/>
</dbReference>
<dbReference type="InterPro" id="IPR041727">
    <property type="entry name" value="NAGK-C"/>
</dbReference>
<dbReference type="NCBIfam" id="TIGR00761">
    <property type="entry name" value="argB"/>
    <property type="match status" value="1"/>
</dbReference>
<dbReference type="PANTHER" id="PTHR23342">
    <property type="entry name" value="N-ACETYLGLUTAMATE SYNTHASE"/>
    <property type="match status" value="1"/>
</dbReference>
<dbReference type="PANTHER" id="PTHR23342:SF0">
    <property type="entry name" value="N-ACETYLGLUTAMATE SYNTHASE, MITOCHONDRIAL"/>
    <property type="match status" value="1"/>
</dbReference>
<dbReference type="Pfam" id="PF00696">
    <property type="entry name" value="AA_kinase"/>
    <property type="match status" value="1"/>
</dbReference>
<dbReference type="PIRSF" id="PIRSF000728">
    <property type="entry name" value="NAGK"/>
    <property type="match status" value="1"/>
</dbReference>
<dbReference type="PRINTS" id="PR00474">
    <property type="entry name" value="GLU5KINASE"/>
</dbReference>
<dbReference type="SUPFAM" id="SSF53633">
    <property type="entry name" value="Carbamate kinase-like"/>
    <property type="match status" value="1"/>
</dbReference>
<evidence type="ECO:0000255" key="1">
    <source>
        <dbReference type="HAMAP-Rule" id="MF_00082"/>
    </source>
</evidence>
<reference key="1">
    <citation type="journal article" date="2009" name="J. Bacteriol.">
        <title>Complete genome sequence of Erythrobacter litoralis HTCC2594.</title>
        <authorList>
            <person name="Oh H.M."/>
            <person name="Giovannoni S.J."/>
            <person name="Ferriera S."/>
            <person name="Johnson J."/>
            <person name="Cho J.C."/>
        </authorList>
    </citation>
    <scope>NUCLEOTIDE SEQUENCE [LARGE SCALE GENOMIC DNA]</scope>
    <source>
        <strain>HTCC2594</strain>
    </source>
</reference>
<name>ARGB_ERYLH</name>
<keyword id="KW-0028">Amino-acid biosynthesis</keyword>
<keyword id="KW-0055">Arginine biosynthesis</keyword>
<keyword id="KW-0067">ATP-binding</keyword>
<keyword id="KW-0963">Cytoplasm</keyword>
<keyword id="KW-0418">Kinase</keyword>
<keyword id="KW-0547">Nucleotide-binding</keyword>
<keyword id="KW-1185">Reference proteome</keyword>
<keyword id="KW-0808">Transferase</keyword>
<feature type="chain" id="PRO_0000335628" description="Acetylglutamate kinase">
    <location>
        <begin position="1"/>
        <end position="299"/>
    </location>
</feature>
<feature type="binding site" evidence="1">
    <location>
        <begin position="68"/>
        <end position="69"/>
    </location>
    <ligand>
        <name>substrate</name>
    </ligand>
</feature>
<feature type="binding site" evidence="1">
    <location>
        <position position="90"/>
    </location>
    <ligand>
        <name>substrate</name>
    </ligand>
</feature>
<feature type="binding site" evidence="1">
    <location>
        <position position="195"/>
    </location>
    <ligand>
        <name>substrate</name>
    </ligand>
</feature>
<feature type="site" description="Transition state stabilizer" evidence="1">
    <location>
        <position position="33"/>
    </location>
</feature>
<feature type="site" description="Transition state stabilizer" evidence="1">
    <location>
        <position position="255"/>
    </location>
</feature>
<accession>Q2N7E1</accession>